<proteinExistence type="inferred from homology"/>
<reference key="1">
    <citation type="journal article" date="2003" name="Nat. Biotechnol.">
        <title>The genome sequence of the entomopathogenic bacterium Photorhabdus luminescens.</title>
        <authorList>
            <person name="Duchaud E."/>
            <person name="Rusniok C."/>
            <person name="Frangeul L."/>
            <person name="Buchrieser C."/>
            <person name="Givaudan A."/>
            <person name="Taourit S."/>
            <person name="Bocs S."/>
            <person name="Boursaux-Eude C."/>
            <person name="Chandler M."/>
            <person name="Charles J.-F."/>
            <person name="Dassa E."/>
            <person name="Derose R."/>
            <person name="Derzelle S."/>
            <person name="Freyssinet G."/>
            <person name="Gaudriault S."/>
            <person name="Medigue C."/>
            <person name="Lanois A."/>
            <person name="Powell K."/>
            <person name="Siguier P."/>
            <person name="Vincent R."/>
            <person name="Wingate V."/>
            <person name="Zouine M."/>
            <person name="Glaser P."/>
            <person name="Boemare N."/>
            <person name="Danchin A."/>
            <person name="Kunst F."/>
        </authorList>
    </citation>
    <scope>NUCLEOTIDE SEQUENCE [LARGE SCALE GENOMIC DNA]</scope>
    <source>
        <strain>DSM 15139 / CIP 105565 / TT01</strain>
    </source>
</reference>
<protein>
    <recommendedName>
        <fullName evidence="1">Acetyl-coenzyme A carboxylase carboxyl transferase subunit alpha</fullName>
        <shortName evidence="1">ACCase subunit alpha</shortName>
        <shortName evidence="1">Acetyl-CoA carboxylase carboxyltransferase subunit alpha</shortName>
        <ecNumber evidence="1">2.1.3.15</ecNumber>
    </recommendedName>
</protein>
<accession>Q7N8N1</accession>
<organism>
    <name type="scientific">Photorhabdus laumondii subsp. laumondii (strain DSM 15139 / CIP 105565 / TT01)</name>
    <name type="common">Photorhabdus luminescens subsp. laumondii</name>
    <dbReference type="NCBI Taxonomy" id="243265"/>
    <lineage>
        <taxon>Bacteria</taxon>
        <taxon>Pseudomonadati</taxon>
        <taxon>Pseudomonadota</taxon>
        <taxon>Gammaproteobacteria</taxon>
        <taxon>Enterobacterales</taxon>
        <taxon>Morganellaceae</taxon>
        <taxon>Photorhabdus</taxon>
    </lineage>
</organism>
<gene>
    <name evidence="1" type="primary">accA</name>
    <name type="ordered locus">plu0688</name>
</gene>
<sequence length="319" mass="35524">MSLNFLEFEQPIAELEAKIDSLTAVSRQGEKLDINLDEEVQRLREKSLELTRKIFSDLGAWQIAQLARHPRRPYTLDYIQHIFTDFEELAGDRAYADDKAIVGGLARIDGRPVMVIGHQKGRETKEKIRRNFGMPAPEGYRKALRLMEMAERFKLPIITFIDTPGAYPGVGAEERGQSEAIARNLREMSRLSVPVICTVIGEGGSGGALAIGVGDKVNMLQYSTYSVISPEGCASILWKSAEKAPLAAEAMGITAPRLKELELVDTVISEPLGGAHRDYEAISTSLKAQLLIDLAELDHLTSEELVNRRYQRLMQYGYC</sequence>
<name>ACCA_PHOLL</name>
<feature type="chain" id="PRO_0000223800" description="Acetyl-coenzyme A carboxylase carboxyl transferase subunit alpha">
    <location>
        <begin position="1"/>
        <end position="319"/>
    </location>
</feature>
<feature type="domain" description="CoA carboxyltransferase C-terminal" evidence="2">
    <location>
        <begin position="35"/>
        <end position="296"/>
    </location>
</feature>
<keyword id="KW-0067">ATP-binding</keyword>
<keyword id="KW-0963">Cytoplasm</keyword>
<keyword id="KW-0275">Fatty acid biosynthesis</keyword>
<keyword id="KW-0276">Fatty acid metabolism</keyword>
<keyword id="KW-0444">Lipid biosynthesis</keyword>
<keyword id="KW-0443">Lipid metabolism</keyword>
<keyword id="KW-0547">Nucleotide-binding</keyword>
<keyword id="KW-1185">Reference proteome</keyword>
<keyword id="KW-0808">Transferase</keyword>
<comment type="function">
    <text evidence="1">Component of the acetyl coenzyme A carboxylase (ACC) complex. First, biotin carboxylase catalyzes the carboxylation of biotin on its carrier protein (BCCP) and then the CO(2) group is transferred by the carboxyltransferase to acetyl-CoA to form malonyl-CoA.</text>
</comment>
<comment type="catalytic activity">
    <reaction evidence="1">
        <text>N(6)-carboxybiotinyl-L-lysyl-[protein] + acetyl-CoA = N(6)-biotinyl-L-lysyl-[protein] + malonyl-CoA</text>
        <dbReference type="Rhea" id="RHEA:54728"/>
        <dbReference type="Rhea" id="RHEA-COMP:10505"/>
        <dbReference type="Rhea" id="RHEA-COMP:10506"/>
        <dbReference type="ChEBI" id="CHEBI:57288"/>
        <dbReference type="ChEBI" id="CHEBI:57384"/>
        <dbReference type="ChEBI" id="CHEBI:83144"/>
        <dbReference type="ChEBI" id="CHEBI:83145"/>
        <dbReference type="EC" id="2.1.3.15"/>
    </reaction>
</comment>
<comment type="pathway">
    <text evidence="1">Lipid metabolism; malonyl-CoA biosynthesis; malonyl-CoA from acetyl-CoA: step 1/1.</text>
</comment>
<comment type="subunit">
    <text evidence="1">Acetyl-CoA carboxylase is a heterohexamer composed of biotin carboxyl carrier protein (AccB), biotin carboxylase (AccC) and two subunits each of ACCase subunit alpha (AccA) and ACCase subunit beta (AccD).</text>
</comment>
<comment type="subcellular location">
    <subcellularLocation>
        <location evidence="1">Cytoplasm</location>
    </subcellularLocation>
</comment>
<comment type="similarity">
    <text evidence="1">Belongs to the AccA family.</text>
</comment>
<dbReference type="EC" id="2.1.3.15" evidence="1"/>
<dbReference type="EMBL" id="BX571861">
    <property type="protein sequence ID" value="CAE12983.1"/>
    <property type="molecule type" value="Genomic_DNA"/>
</dbReference>
<dbReference type="RefSeq" id="WP_011145064.1">
    <property type="nucleotide sequence ID" value="NC_005126.1"/>
</dbReference>
<dbReference type="SMR" id="Q7N8N1"/>
<dbReference type="STRING" id="243265.plu0688"/>
<dbReference type="GeneID" id="48846977"/>
<dbReference type="KEGG" id="plu:plu0688"/>
<dbReference type="eggNOG" id="COG0825">
    <property type="taxonomic scope" value="Bacteria"/>
</dbReference>
<dbReference type="HOGENOM" id="CLU_015486_0_2_6"/>
<dbReference type="OrthoDB" id="9808023at2"/>
<dbReference type="UniPathway" id="UPA00655">
    <property type="reaction ID" value="UER00711"/>
</dbReference>
<dbReference type="Proteomes" id="UP000002514">
    <property type="component" value="Chromosome"/>
</dbReference>
<dbReference type="GO" id="GO:0009317">
    <property type="term" value="C:acetyl-CoA carboxylase complex"/>
    <property type="evidence" value="ECO:0007669"/>
    <property type="project" value="InterPro"/>
</dbReference>
<dbReference type="GO" id="GO:0003989">
    <property type="term" value="F:acetyl-CoA carboxylase activity"/>
    <property type="evidence" value="ECO:0007669"/>
    <property type="project" value="InterPro"/>
</dbReference>
<dbReference type="GO" id="GO:0005524">
    <property type="term" value="F:ATP binding"/>
    <property type="evidence" value="ECO:0007669"/>
    <property type="project" value="UniProtKB-KW"/>
</dbReference>
<dbReference type="GO" id="GO:0016743">
    <property type="term" value="F:carboxyl- or carbamoyltransferase activity"/>
    <property type="evidence" value="ECO:0007669"/>
    <property type="project" value="UniProtKB-UniRule"/>
</dbReference>
<dbReference type="GO" id="GO:0006633">
    <property type="term" value="P:fatty acid biosynthetic process"/>
    <property type="evidence" value="ECO:0007669"/>
    <property type="project" value="UniProtKB-KW"/>
</dbReference>
<dbReference type="GO" id="GO:2001295">
    <property type="term" value="P:malonyl-CoA biosynthetic process"/>
    <property type="evidence" value="ECO:0007669"/>
    <property type="project" value="UniProtKB-UniRule"/>
</dbReference>
<dbReference type="FunFam" id="3.90.226.10:FF:000008">
    <property type="entry name" value="Acetyl-coenzyme A carboxylase carboxyl transferase subunit alpha"/>
    <property type="match status" value="1"/>
</dbReference>
<dbReference type="Gene3D" id="3.90.226.10">
    <property type="entry name" value="2-enoyl-CoA Hydratase, Chain A, domain 1"/>
    <property type="match status" value="1"/>
</dbReference>
<dbReference type="HAMAP" id="MF_00823">
    <property type="entry name" value="AcetylCoA_CT_alpha"/>
    <property type="match status" value="1"/>
</dbReference>
<dbReference type="InterPro" id="IPR001095">
    <property type="entry name" value="Acetyl_CoA_COase_a_su"/>
</dbReference>
<dbReference type="InterPro" id="IPR029045">
    <property type="entry name" value="ClpP/crotonase-like_dom_sf"/>
</dbReference>
<dbReference type="InterPro" id="IPR011763">
    <property type="entry name" value="COA_CT_C"/>
</dbReference>
<dbReference type="NCBIfam" id="TIGR00513">
    <property type="entry name" value="accA"/>
    <property type="match status" value="1"/>
</dbReference>
<dbReference type="NCBIfam" id="NF041504">
    <property type="entry name" value="AccA_sub"/>
    <property type="match status" value="1"/>
</dbReference>
<dbReference type="NCBIfam" id="NF004344">
    <property type="entry name" value="PRK05724.1"/>
    <property type="match status" value="1"/>
</dbReference>
<dbReference type="PANTHER" id="PTHR42853">
    <property type="entry name" value="ACETYL-COENZYME A CARBOXYLASE CARBOXYL TRANSFERASE SUBUNIT ALPHA"/>
    <property type="match status" value="1"/>
</dbReference>
<dbReference type="PANTHER" id="PTHR42853:SF3">
    <property type="entry name" value="ACETYL-COENZYME A CARBOXYLASE CARBOXYL TRANSFERASE SUBUNIT ALPHA, CHLOROPLASTIC"/>
    <property type="match status" value="1"/>
</dbReference>
<dbReference type="Pfam" id="PF03255">
    <property type="entry name" value="ACCA"/>
    <property type="match status" value="1"/>
</dbReference>
<dbReference type="PRINTS" id="PR01069">
    <property type="entry name" value="ACCCTRFRASEA"/>
</dbReference>
<dbReference type="SUPFAM" id="SSF52096">
    <property type="entry name" value="ClpP/crotonase"/>
    <property type="match status" value="1"/>
</dbReference>
<dbReference type="PROSITE" id="PS50989">
    <property type="entry name" value="COA_CT_CTER"/>
    <property type="match status" value="1"/>
</dbReference>
<evidence type="ECO:0000255" key="1">
    <source>
        <dbReference type="HAMAP-Rule" id="MF_00823"/>
    </source>
</evidence>
<evidence type="ECO:0000255" key="2">
    <source>
        <dbReference type="PROSITE-ProRule" id="PRU01137"/>
    </source>
</evidence>